<name>GPH_SHIDS</name>
<keyword id="KW-0119">Carbohydrate metabolism</keyword>
<keyword id="KW-0868">Chloride</keyword>
<keyword id="KW-0378">Hydrolase</keyword>
<keyword id="KW-0460">Magnesium</keyword>
<keyword id="KW-0479">Metal-binding</keyword>
<keyword id="KW-1185">Reference proteome</keyword>
<feature type="chain" id="PRO_0000238178" description="Phosphoglycolate phosphatase">
    <location>
        <begin position="1"/>
        <end position="252"/>
    </location>
</feature>
<feature type="active site" description="Nucleophile" evidence="1">
    <location>
        <position position="13"/>
    </location>
</feature>
<feature type="binding site" evidence="1">
    <location>
        <position position="13"/>
    </location>
    <ligand>
        <name>Mg(2+)</name>
        <dbReference type="ChEBI" id="CHEBI:18420"/>
    </ligand>
</feature>
<feature type="binding site" evidence="1">
    <location>
        <position position="15"/>
    </location>
    <ligand>
        <name>Mg(2+)</name>
        <dbReference type="ChEBI" id="CHEBI:18420"/>
    </ligand>
</feature>
<feature type="binding site" evidence="1">
    <location>
        <position position="192"/>
    </location>
    <ligand>
        <name>Mg(2+)</name>
        <dbReference type="ChEBI" id="CHEBI:18420"/>
    </ligand>
</feature>
<protein>
    <recommendedName>
        <fullName evidence="1">Phosphoglycolate phosphatase</fullName>
        <shortName evidence="1">PGP</shortName>
        <shortName evidence="1">PGPase</shortName>
        <ecNumber evidence="1">3.1.3.18</ecNumber>
    </recommendedName>
</protein>
<accession>Q32AJ7</accession>
<comment type="function">
    <text evidence="1">Specifically catalyzes the dephosphorylation of 2-phosphoglycolate. Is involved in the dissimilation of the intracellular 2-phosphoglycolate formed during the DNA repair of 3'-phosphoglycolate ends, a major class of DNA lesions induced by oxidative stress.</text>
</comment>
<comment type="catalytic activity">
    <reaction evidence="1">
        <text>2-phosphoglycolate + H2O = glycolate + phosphate</text>
        <dbReference type="Rhea" id="RHEA:14369"/>
        <dbReference type="ChEBI" id="CHEBI:15377"/>
        <dbReference type="ChEBI" id="CHEBI:29805"/>
        <dbReference type="ChEBI" id="CHEBI:43474"/>
        <dbReference type="ChEBI" id="CHEBI:58033"/>
        <dbReference type="EC" id="3.1.3.18"/>
    </reaction>
</comment>
<comment type="cofactor">
    <cofactor evidence="1">
        <name>Mg(2+)</name>
        <dbReference type="ChEBI" id="CHEBI:18420"/>
    </cofactor>
</comment>
<comment type="cofactor">
    <cofactor evidence="1">
        <name>chloride</name>
        <dbReference type="ChEBI" id="CHEBI:17996"/>
    </cofactor>
</comment>
<comment type="pathway">
    <text evidence="1">Organic acid metabolism; glycolate biosynthesis; glycolate from 2-phosphoglycolate: step 1/1.</text>
</comment>
<comment type="subunit">
    <text evidence="1">Monomer.</text>
</comment>
<comment type="similarity">
    <text evidence="1">Belongs to the HAD-like hydrolase superfamily. CbbY/CbbZ/Gph/YieH family.</text>
</comment>
<sequence>MNKFEDIRGVAFDLDGTLVDSALGLAAAVDMALYALKLPIAGEERVITWIGNGADVLMERALTWARQERATLRKTMGKPPVDDDIPAEEQVRILRKLFDRYYGEVAEEGTFLFPHVADTLGALQAKGLPLGLVTNKPTPFVAPLLEALDIAKYFSVVIGGDDVQNKKPHPDPLLLVAERMGIAPQQMLFVGDSRNDIQAAKAAGCPSVGLTYGYNYGEAIDLSQPDVIYQSINDLLPALGLPHSENQESKND</sequence>
<gene>
    <name type="ordered locus">SDY_3694</name>
</gene>
<proteinExistence type="inferred from homology"/>
<evidence type="ECO:0000255" key="1">
    <source>
        <dbReference type="HAMAP-Rule" id="MF_00495"/>
    </source>
</evidence>
<organism>
    <name type="scientific">Shigella dysenteriae serotype 1 (strain Sd197)</name>
    <dbReference type="NCBI Taxonomy" id="300267"/>
    <lineage>
        <taxon>Bacteria</taxon>
        <taxon>Pseudomonadati</taxon>
        <taxon>Pseudomonadota</taxon>
        <taxon>Gammaproteobacteria</taxon>
        <taxon>Enterobacterales</taxon>
        <taxon>Enterobacteriaceae</taxon>
        <taxon>Shigella</taxon>
    </lineage>
</organism>
<reference key="1">
    <citation type="journal article" date="2005" name="Nucleic Acids Res.">
        <title>Genome dynamics and diversity of Shigella species, the etiologic agents of bacillary dysentery.</title>
        <authorList>
            <person name="Yang F."/>
            <person name="Yang J."/>
            <person name="Zhang X."/>
            <person name="Chen L."/>
            <person name="Jiang Y."/>
            <person name="Yan Y."/>
            <person name="Tang X."/>
            <person name="Wang J."/>
            <person name="Xiong Z."/>
            <person name="Dong J."/>
            <person name="Xue Y."/>
            <person name="Zhu Y."/>
            <person name="Xu X."/>
            <person name="Sun L."/>
            <person name="Chen S."/>
            <person name="Nie H."/>
            <person name="Peng J."/>
            <person name="Xu J."/>
            <person name="Wang Y."/>
            <person name="Yuan Z."/>
            <person name="Wen Y."/>
            <person name="Yao Z."/>
            <person name="Shen Y."/>
            <person name="Qiang B."/>
            <person name="Hou Y."/>
            <person name="Yu J."/>
            <person name="Jin Q."/>
        </authorList>
    </citation>
    <scope>NUCLEOTIDE SEQUENCE [LARGE SCALE GENOMIC DNA]</scope>
    <source>
        <strain>Sd197</strain>
    </source>
</reference>
<dbReference type="EC" id="3.1.3.18" evidence="1"/>
<dbReference type="EMBL" id="CP000034">
    <property type="protein sequence ID" value="ABB63658.1"/>
    <property type="molecule type" value="Genomic_DNA"/>
</dbReference>
<dbReference type="RefSeq" id="WP_001031704.1">
    <property type="nucleotide sequence ID" value="NC_007606.1"/>
</dbReference>
<dbReference type="RefSeq" id="YP_405149.1">
    <property type="nucleotide sequence ID" value="NC_007606.1"/>
</dbReference>
<dbReference type="SMR" id="Q32AJ7"/>
<dbReference type="STRING" id="300267.SDY_3694"/>
<dbReference type="EnsemblBacteria" id="ABB63658">
    <property type="protein sequence ID" value="ABB63658"/>
    <property type="gene ID" value="SDY_3694"/>
</dbReference>
<dbReference type="KEGG" id="sdy:SDY_3694"/>
<dbReference type="PATRIC" id="fig|300267.13.peg.4382"/>
<dbReference type="HOGENOM" id="CLU_045011_19_1_6"/>
<dbReference type="UniPathway" id="UPA00865">
    <property type="reaction ID" value="UER00834"/>
</dbReference>
<dbReference type="Proteomes" id="UP000002716">
    <property type="component" value="Chromosome"/>
</dbReference>
<dbReference type="GO" id="GO:0005829">
    <property type="term" value="C:cytosol"/>
    <property type="evidence" value="ECO:0007669"/>
    <property type="project" value="TreeGrafter"/>
</dbReference>
<dbReference type="GO" id="GO:0046872">
    <property type="term" value="F:metal ion binding"/>
    <property type="evidence" value="ECO:0007669"/>
    <property type="project" value="UniProtKB-KW"/>
</dbReference>
<dbReference type="GO" id="GO:0008967">
    <property type="term" value="F:phosphoglycolate phosphatase activity"/>
    <property type="evidence" value="ECO:0007669"/>
    <property type="project" value="UniProtKB-UniRule"/>
</dbReference>
<dbReference type="GO" id="GO:0005975">
    <property type="term" value="P:carbohydrate metabolic process"/>
    <property type="evidence" value="ECO:0007669"/>
    <property type="project" value="InterPro"/>
</dbReference>
<dbReference type="GO" id="GO:0006281">
    <property type="term" value="P:DNA repair"/>
    <property type="evidence" value="ECO:0007669"/>
    <property type="project" value="TreeGrafter"/>
</dbReference>
<dbReference type="GO" id="GO:0046295">
    <property type="term" value="P:glycolate biosynthetic process"/>
    <property type="evidence" value="ECO:0007669"/>
    <property type="project" value="UniProtKB-UniRule"/>
</dbReference>
<dbReference type="CDD" id="cd16417">
    <property type="entry name" value="HAD_PGPase"/>
    <property type="match status" value="1"/>
</dbReference>
<dbReference type="FunFam" id="1.10.150.240:FF:000003">
    <property type="entry name" value="Phosphoglycolate phosphatase"/>
    <property type="match status" value="1"/>
</dbReference>
<dbReference type="FunFam" id="3.40.50.1000:FF:000022">
    <property type="entry name" value="Phosphoglycolate phosphatase"/>
    <property type="match status" value="1"/>
</dbReference>
<dbReference type="Gene3D" id="3.40.50.1000">
    <property type="entry name" value="HAD superfamily/HAD-like"/>
    <property type="match status" value="1"/>
</dbReference>
<dbReference type="Gene3D" id="1.10.150.240">
    <property type="entry name" value="Putative phosphatase, domain 2"/>
    <property type="match status" value="1"/>
</dbReference>
<dbReference type="HAMAP" id="MF_00495">
    <property type="entry name" value="GPH_hydrolase_bact"/>
    <property type="match status" value="1"/>
</dbReference>
<dbReference type="InterPro" id="IPR050155">
    <property type="entry name" value="HAD-like_hydrolase_sf"/>
</dbReference>
<dbReference type="InterPro" id="IPR036412">
    <property type="entry name" value="HAD-like_sf"/>
</dbReference>
<dbReference type="InterPro" id="IPR006439">
    <property type="entry name" value="HAD-SF_hydro_IA"/>
</dbReference>
<dbReference type="InterPro" id="IPR023214">
    <property type="entry name" value="HAD_sf"/>
</dbReference>
<dbReference type="InterPro" id="IPR023198">
    <property type="entry name" value="PGP-like_dom2"/>
</dbReference>
<dbReference type="InterPro" id="IPR037512">
    <property type="entry name" value="PGPase_prok"/>
</dbReference>
<dbReference type="NCBIfam" id="TIGR01549">
    <property type="entry name" value="HAD-SF-IA-v1"/>
    <property type="match status" value="1"/>
</dbReference>
<dbReference type="NCBIfam" id="TIGR01509">
    <property type="entry name" value="HAD-SF-IA-v3"/>
    <property type="match status" value="1"/>
</dbReference>
<dbReference type="NCBIfam" id="TIGR01449">
    <property type="entry name" value="PGP_bact"/>
    <property type="match status" value="1"/>
</dbReference>
<dbReference type="NCBIfam" id="NF009694">
    <property type="entry name" value="PRK13222.1-1"/>
    <property type="match status" value="1"/>
</dbReference>
<dbReference type="NCBIfam" id="NF009695">
    <property type="entry name" value="PRK13222.1-2"/>
    <property type="match status" value="1"/>
</dbReference>
<dbReference type="NCBIfam" id="NF009697">
    <property type="entry name" value="PRK13222.1-4"/>
    <property type="match status" value="1"/>
</dbReference>
<dbReference type="PANTHER" id="PTHR43434">
    <property type="entry name" value="PHOSPHOGLYCOLATE PHOSPHATASE"/>
    <property type="match status" value="1"/>
</dbReference>
<dbReference type="PANTHER" id="PTHR43434:SF1">
    <property type="entry name" value="PHOSPHOGLYCOLATE PHOSPHATASE"/>
    <property type="match status" value="1"/>
</dbReference>
<dbReference type="Pfam" id="PF00702">
    <property type="entry name" value="Hydrolase"/>
    <property type="match status" value="1"/>
</dbReference>
<dbReference type="PRINTS" id="PR00413">
    <property type="entry name" value="HADHALOGNASE"/>
</dbReference>
<dbReference type="SFLD" id="SFLDG01135">
    <property type="entry name" value="C1.5.6:_HAD__Beta-PGM__Phospha"/>
    <property type="match status" value="1"/>
</dbReference>
<dbReference type="SFLD" id="SFLDG01129">
    <property type="entry name" value="C1.5:_HAD__Beta-PGM__Phosphata"/>
    <property type="match status" value="1"/>
</dbReference>
<dbReference type="SUPFAM" id="SSF56784">
    <property type="entry name" value="HAD-like"/>
    <property type="match status" value="1"/>
</dbReference>